<reference key="1">
    <citation type="journal article" date="2007" name="Genome Biol.">
        <title>Characterization and modeling of the Haemophilus influenzae core and supragenomes based on the complete genomic sequences of Rd and 12 clinical nontypeable strains.</title>
        <authorList>
            <person name="Hogg J.S."/>
            <person name="Hu F.Z."/>
            <person name="Janto B."/>
            <person name="Boissy R."/>
            <person name="Hayes J."/>
            <person name="Keefe R."/>
            <person name="Post J.C."/>
            <person name="Ehrlich G.D."/>
        </authorList>
    </citation>
    <scope>NUCLEOTIDE SEQUENCE [LARGE SCALE GENOMIC DNA]</scope>
    <source>
        <strain>PittGG</strain>
    </source>
</reference>
<protein>
    <recommendedName>
        <fullName evidence="1">UPF0299 membrane protein CGSHiGG_01475</fullName>
    </recommendedName>
</protein>
<evidence type="ECO:0000255" key="1">
    <source>
        <dbReference type="HAMAP-Rule" id="MF_01144"/>
    </source>
</evidence>
<name>Y1475_HAEIG</name>
<sequence length="140" mass="15958">MIQKLFLLVRSLVILSIMLYLGNLIAYYIPSGVPGSIWGLLLLFLGLTTRVIHLNWIYLGASLLIRFMAVLFVPVSVGIIKYSDLLIEQINILLVPNIVSTCVTLLVIGFLGHYLYQMQSFTHKRKKVIKRRENQVKQAN</sequence>
<feature type="chain" id="PRO_1000065460" description="UPF0299 membrane protein CGSHiGG_01475">
    <location>
        <begin position="1"/>
        <end position="140"/>
    </location>
</feature>
<feature type="transmembrane region" description="Helical" evidence="1">
    <location>
        <begin position="1"/>
        <end position="21"/>
    </location>
</feature>
<feature type="transmembrane region" description="Helical" evidence="1">
    <location>
        <begin position="33"/>
        <end position="52"/>
    </location>
</feature>
<feature type="transmembrane region" description="Helical" evidence="1">
    <location>
        <begin position="60"/>
        <end position="80"/>
    </location>
</feature>
<feature type="transmembrane region" description="Helical" evidence="1">
    <location>
        <begin position="92"/>
        <end position="112"/>
    </location>
</feature>
<accession>A5UF21</accession>
<comment type="subcellular location">
    <subcellularLocation>
        <location evidence="1">Cell inner membrane</location>
        <topology evidence="1">Multi-pass membrane protein</topology>
    </subcellularLocation>
</comment>
<comment type="similarity">
    <text evidence="1">Belongs to the UPF0299 family.</text>
</comment>
<gene>
    <name type="ordered locus">CGSHiGG_01475</name>
</gene>
<proteinExistence type="inferred from homology"/>
<dbReference type="EMBL" id="CP000672">
    <property type="protein sequence ID" value="ABQ99376.1"/>
    <property type="molecule type" value="Genomic_DNA"/>
</dbReference>
<dbReference type="SMR" id="A5UF21"/>
<dbReference type="KEGG" id="hiq:CGSHiGG_01475"/>
<dbReference type="HOGENOM" id="CLU_113736_1_1_6"/>
<dbReference type="Proteomes" id="UP000001990">
    <property type="component" value="Chromosome"/>
</dbReference>
<dbReference type="GO" id="GO:0005886">
    <property type="term" value="C:plasma membrane"/>
    <property type="evidence" value="ECO:0007669"/>
    <property type="project" value="UniProtKB-SubCell"/>
</dbReference>
<dbReference type="HAMAP" id="MF_01144">
    <property type="entry name" value="UPF0299"/>
    <property type="match status" value="1"/>
</dbReference>
<dbReference type="InterPro" id="IPR005538">
    <property type="entry name" value="LrgA/CidA"/>
</dbReference>
<dbReference type="InterPro" id="IPR022957">
    <property type="entry name" value="Uncharacterised_UPF0299"/>
</dbReference>
<dbReference type="NCBIfam" id="NF002494">
    <property type="entry name" value="PRK01821.1"/>
    <property type="match status" value="1"/>
</dbReference>
<dbReference type="PANTHER" id="PTHR33931">
    <property type="entry name" value="HOLIN-LIKE PROTEIN CIDA-RELATED"/>
    <property type="match status" value="1"/>
</dbReference>
<dbReference type="PANTHER" id="PTHR33931:SF5">
    <property type="entry name" value="UPF0299 MEMBRANE PROTEIN YOHJ"/>
    <property type="match status" value="1"/>
</dbReference>
<dbReference type="Pfam" id="PF03788">
    <property type="entry name" value="LrgA"/>
    <property type="match status" value="1"/>
</dbReference>
<keyword id="KW-0997">Cell inner membrane</keyword>
<keyword id="KW-1003">Cell membrane</keyword>
<keyword id="KW-0472">Membrane</keyword>
<keyword id="KW-0812">Transmembrane</keyword>
<keyword id="KW-1133">Transmembrane helix</keyword>
<organism>
    <name type="scientific">Haemophilus influenzae (strain PittGG)</name>
    <dbReference type="NCBI Taxonomy" id="374931"/>
    <lineage>
        <taxon>Bacteria</taxon>
        <taxon>Pseudomonadati</taxon>
        <taxon>Pseudomonadota</taxon>
        <taxon>Gammaproteobacteria</taxon>
        <taxon>Pasteurellales</taxon>
        <taxon>Pasteurellaceae</taxon>
        <taxon>Haemophilus</taxon>
    </lineage>
</organism>